<comment type="function">
    <text evidence="4">Part of the ABC transporter complex LsrABCD involved in autoinducer 2 (AI-2) import. Binds AI-2 and delivers it to the LsrC and LsrD permeases (Probable).</text>
</comment>
<comment type="subunit">
    <text evidence="3">The complex is composed of two ATP-binding proteins (LsrA), two transmembrane proteins (LsrC and LsrD) and a solute-binding protein (LsrB).</text>
</comment>
<comment type="subcellular location">
    <subcellularLocation>
        <location evidence="3">Periplasm</location>
    </subcellularLocation>
</comment>
<comment type="induction">
    <text evidence="2">In the absence of AI-2, repressed by LsrR. Induced by AI-2, via release of the LsrR repressor.</text>
</comment>
<comment type="similarity">
    <text evidence="3">Belongs to the bacterial solute-binding protein 2 family.</text>
</comment>
<evidence type="ECO:0000255" key="1"/>
<evidence type="ECO:0000269" key="2">
    <source>
    </source>
</evidence>
<evidence type="ECO:0000305" key="3"/>
<evidence type="ECO:0000305" key="4">
    <source>
    </source>
</evidence>
<evidence type="ECO:0007829" key="5">
    <source>
        <dbReference type="PDB" id="1TJY"/>
    </source>
</evidence>
<proteinExistence type="evidence at protein level"/>
<protein>
    <recommendedName>
        <fullName>Autoinducer 2-binding protein LsrB</fullName>
        <shortName>AI-2-binding protein LsrB</shortName>
    </recommendedName>
</protein>
<feature type="signal peptide" evidence="1">
    <location>
        <begin position="1"/>
        <end position="26"/>
    </location>
</feature>
<feature type="chain" id="PRO_0000351330" description="Autoinducer 2-binding protein LsrB">
    <location>
        <begin position="27"/>
        <end position="340"/>
    </location>
</feature>
<feature type="strand" evidence="5">
    <location>
        <begin position="29"/>
        <end position="33"/>
    </location>
</feature>
<feature type="strand" evidence="5">
    <location>
        <begin position="35"/>
        <end position="39"/>
    </location>
</feature>
<feature type="helix" evidence="5">
    <location>
        <begin position="40"/>
        <end position="56"/>
    </location>
</feature>
<feature type="strand" evidence="5">
    <location>
        <begin position="59"/>
        <end position="62"/>
    </location>
</feature>
<feature type="helix" evidence="5">
    <location>
        <begin position="70"/>
        <end position="82"/>
    </location>
</feature>
<feature type="strand" evidence="5">
    <location>
        <begin position="86"/>
        <end position="90"/>
    </location>
</feature>
<feature type="strand" evidence="5">
    <location>
        <begin position="93"/>
        <end position="96"/>
    </location>
</feature>
<feature type="helix" evidence="5">
    <location>
        <begin position="99"/>
        <end position="107"/>
    </location>
</feature>
<feature type="strand" evidence="5">
    <location>
        <begin position="111"/>
        <end position="117"/>
    </location>
</feature>
<feature type="helix" evidence="5">
    <location>
        <begin position="121"/>
        <end position="123"/>
    </location>
</feature>
<feature type="strand" evidence="5">
    <location>
        <begin position="125"/>
        <end position="130"/>
    </location>
</feature>
<feature type="helix" evidence="5">
    <location>
        <begin position="133"/>
        <end position="148"/>
    </location>
</feature>
<feature type="strand" evidence="5">
    <location>
        <begin position="150"/>
        <end position="160"/>
    </location>
</feature>
<feature type="helix" evidence="5">
    <location>
        <begin position="165"/>
        <end position="181"/>
    </location>
</feature>
<feature type="strand" evidence="5">
    <location>
        <begin position="185"/>
        <end position="192"/>
    </location>
</feature>
<feature type="helix" evidence="5">
    <location>
        <begin position="197"/>
        <end position="210"/>
    </location>
</feature>
<feature type="strand" evidence="5">
    <location>
        <begin position="216"/>
        <end position="219"/>
    </location>
</feature>
<feature type="helix" evidence="5">
    <location>
        <begin position="224"/>
        <end position="234"/>
    </location>
</feature>
<feature type="strand" evidence="5">
    <location>
        <begin position="241"/>
        <end position="245"/>
    </location>
</feature>
<feature type="helix" evidence="5">
    <location>
        <begin position="248"/>
        <end position="256"/>
    </location>
</feature>
<feature type="strand" evidence="5">
    <location>
        <begin position="261"/>
        <end position="265"/>
    </location>
</feature>
<feature type="helix" evidence="5">
    <location>
        <begin position="268"/>
        <end position="283"/>
    </location>
</feature>
<feature type="strand" evidence="5">
    <location>
        <begin position="293"/>
        <end position="296"/>
    </location>
</feature>
<feature type="turn" evidence="5">
    <location>
        <begin position="297"/>
        <end position="299"/>
    </location>
</feature>
<feature type="strand" evidence="5">
    <location>
        <begin position="300"/>
        <end position="305"/>
    </location>
</feature>
<feature type="helix" evidence="5">
    <location>
        <begin position="307"/>
        <end position="310"/>
    </location>
</feature>
<feature type="strand" evidence="5">
    <location>
        <begin position="320"/>
        <end position="323"/>
    </location>
</feature>
<feature type="strand" evidence="5">
    <location>
        <begin position="328"/>
        <end position="331"/>
    </location>
</feature>
<feature type="turn" evidence="5">
    <location>
        <begin position="332"/>
        <end position="334"/>
    </location>
</feature>
<feature type="helix" evidence="5">
    <location>
        <begin position="335"/>
        <end position="337"/>
    </location>
</feature>
<keyword id="KW-0002">3D-structure</keyword>
<keyword id="KW-0574">Periplasm</keyword>
<keyword id="KW-1185">Reference proteome</keyword>
<keyword id="KW-0732">Signal</keyword>
<dbReference type="EMBL" id="AE006468">
    <property type="protein sequence ID" value="AAL22917.1"/>
    <property type="molecule type" value="Genomic_DNA"/>
</dbReference>
<dbReference type="RefSeq" id="WP_000090737.1">
    <property type="nucleotide sequence ID" value="NC_003197.2"/>
</dbReference>
<dbReference type="PDB" id="1TJY">
    <property type="method" value="X-ray"/>
    <property type="resolution" value="1.30 A"/>
    <property type="chains" value="A=27-340"/>
</dbReference>
<dbReference type="PDB" id="1TM2">
    <property type="method" value="X-ray"/>
    <property type="resolution" value="1.90 A"/>
    <property type="chains" value="A=27-340"/>
</dbReference>
<dbReference type="PDBsum" id="1TJY"/>
<dbReference type="PDBsum" id="1TM2"/>
<dbReference type="SMR" id="Q8ZKQ1"/>
<dbReference type="STRING" id="99287.STM4077"/>
<dbReference type="PaxDb" id="99287-STM4077"/>
<dbReference type="KEGG" id="stm:STM4077"/>
<dbReference type="PATRIC" id="fig|99287.12.peg.4297"/>
<dbReference type="HOGENOM" id="CLU_037628_3_0_6"/>
<dbReference type="OMA" id="KQVNNPY"/>
<dbReference type="PhylomeDB" id="Q8ZKQ1"/>
<dbReference type="BioCyc" id="SENT99287:STM4077-MONOMER"/>
<dbReference type="EvolutionaryTrace" id="Q8ZKQ1"/>
<dbReference type="Proteomes" id="UP000001014">
    <property type="component" value="Chromosome"/>
</dbReference>
<dbReference type="GO" id="GO:0043190">
    <property type="term" value="C:ATP-binding cassette (ABC) transporter complex"/>
    <property type="evidence" value="ECO:0007669"/>
    <property type="project" value="InterPro"/>
</dbReference>
<dbReference type="GO" id="GO:0042597">
    <property type="term" value="C:periplasmic space"/>
    <property type="evidence" value="ECO:0007669"/>
    <property type="project" value="UniProtKB-SubCell"/>
</dbReference>
<dbReference type="GO" id="GO:0055085">
    <property type="term" value="P:transmembrane transport"/>
    <property type="evidence" value="ECO:0000318"/>
    <property type="project" value="GO_Central"/>
</dbReference>
<dbReference type="CDD" id="cd20003">
    <property type="entry name" value="PBP1_LsrB_Quorum_Sensing"/>
    <property type="match status" value="1"/>
</dbReference>
<dbReference type="Gene3D" id="3.40.50.2300">
    <property type="match status" value="2"/>
</dbReference>
<dbReference type="InterPro" id="IPR050555">
    <property type="entry name" value="Bact_Solute-Bind_Prot2"/>
</dbReference>
<dbReference type="InterPro" id="IPR030159">
    <property type="entry name" value="LsrB"/>
</dbReference>
<dbReference type="InterPro" id="IPR028082">
    <property type="entry name" value="Peripla_BP_I"/>
</dbReference>
<dbReference type="InterPro" id="IPR025997">
    <property type="entry name" value="SBP_2_dom"/>
</dbReference>
<dbReference type="NCBIfam" id="NF011937">
    <property type="entry name" value="PRK15408.1"/>
    <property type="match status" value="1"/>
</dbReference>
<dbReference type="PANTHER" id="PTHR30036:SF7">
    <property type="entry name" value="ABC TRANSPORTER PERIPLASMIC-BINDING PROTEIN YPHF"/>
    <property type="match status" value="1"/>
</dbReference>
<dbReference type="PANTHER" id="PTHR30036">
    <property type="entry name" value="D-XYLOSE-BINDING PERIPLASMIC PROTEIN"/>
    <property type="match status" value="1"/>
</dbReference>
<dbReference type="Pfam" id="PF13407">
    <property type="entry name" value="Peripla_BP_4"/>
    <property type="match status" value="1"/>
</dbReference>
<dbReference type="SUPFAM" id="SSF53822">
    <property type="entry name" value="Periplasmic binding protein-like I"/>
    <property type="match status" value="1"/>
</dbReference>
<gene>
    <name type="primary">lsrB</name>
    <name type="ordered locus">STM4077</name>
</gene>
<accession>Q8ZKQ1</accession>
<name>LSRB_SALTY</name>
<reference key="1">
    <citation type="journal article" date="2001" name="Nature">
        <title>Complete genome sequence of Salmonella enterica serovar Typhimurium LT2.</title>
        <authorList>
            <person name="McClelland M."/>
            <person name="Sanderson K.E."/>
            <person name="Spieth J."/>
            <person name="Clifton S.W."/>
            <person name="Latreille P."/>
            <person name="Courtney L."/>
            <person name="Porwollik S."/>
            <person name="Ali J."/>
            <person name="Dante M."/>
            <person name="Du F."/>
            <person name="Hou S."/>
            <person name="Layman D."/>
            <person name="Leonard S."/>
            <person name="Nguyen C."/>
            <person name="Scott K."/>
            <person name="Holmes A."/>
            <person name="Grewal N."/>
            <person name="Mulvaney E."/>
            <person name="Ryan E."/>
            <person name="Sun H."/>
            <person name="Florea L."/>
            <person name="Miller W."/>
            <person name="Stoneking T."/>
            <person name="Nhan M."/>
            <person name="Waterston R."/>
            <person name="Wilson R.K."/>
        </authorList>
    </citation>
    <scope>NUCLEOTIDE SEQUENCE [LARGE SCALE GENOMIC DNA]</scope>
    <source>
        <strain>LT2 / SGSC1412 / ATCC 700720</strain>
    </source>
</reference>
<reference key="2">
    <citation type="journal article" date="2001" name="Mol. Microbiol.">
        <title>The LuxS-dependent autoinducer AI-2 controls the expression of an ABC transporter that functions in AI-2 uptake in Salmonella typhimurium.</title>
        <authorList>
            <person name="Taga M.E."/>
            <person name="Semmelhack J.L."/>
            <person name="Bassler B.L."/>
        </authorList>
    </citation>
    <scope>FUNCTION IN AI-2 IMPORT</scope>
    <scope>INDUCTION</scope>
    <source>
        <strain>ATCC 14028 / SGSG 2980 / CDC 6516-60 / NCTC 12023</strain>
    </source>
</reference>
<sequence length="340" mass="36760">MARHSIKMIALLTAFGLASAAMTVQAAERIAFIPKLVGVGFFTSGGNGAQEAGKALGIDVTYDGPTEPSVSGQVQLVNNFVNQGYDAIIVSAVSPDGLCPALKRAMQRGVKILTWDSDTKPECRSYYINQGTPKQLGSMLVEMAAHQVDKEKAKVAFFYSSPTVTDQNQWVKEAKAKISQEHPGWEIVTTQFGYNDATKSLQTAEGIIKAYPDLDAIIAPDANALPAAAQAAENLKRNNLAIVGFSTPNVMRPYVQRGTVKEFGLWDVVQQGKISVYVANALLKNMPMNVGDSLDIPGIGKVTVSPNSEQGYHYEAKGNGIVLLPERVIFNKDNIDKYDF</sequence>
<organism>
    <name type="scientific">Salmonella typhimurium (strain LT2 / SGSC1412 / ATCC 700720)</name>
    <dbReference type="NCBI Taxonomy" id="99287"/>
    <lineage>
        <taxon>Bacteria</taxon>
        <taxon>Pseudomonadati</taxon>
        <taxon>Pseudomonadota</taxon>
        <taxon>Gammaproteobacteria</taxon>
        <taxon>Enterobacterales</taxon>
        <taxon>Enterobacteriaceae</taxon>
        <taxon>Salmonella</taxon>
    </lineage>
</organism>